<gene>
    <name evidence="14" type="primary">pilY1</name>
    <name evidence="15" type="ORF">PAK_05020</name>
    <name evidence="16" type="ORF">Y880_0129235</name>
</gene>
<feature type="signal peptide" evidence="14">
    <location>
        <begin position="1"/>
        <end position="30"/>
    </location>
</feature>
<feature type="chain" id="PRO_0000431917" description="Type IV pilus biogenesis factor PilY1" evidence="14">
    <location>
        <begin position="31"/>
        <end position="1163"/>
    </location>
</feature>
<feature type="region of interest" description="Disordered" evidence="3">
    <location>
        <begin position="329"/>
        <end position="352"/>
    </location>
</feature>
<feature type="region of interest" description="Integrin-binding motif RGD" evidence="10">
    <location>
        <begin position="619"/>
        <end position="621"/>
    </location>
</feature>
<feature type="region of interest" description="Disordered" evidence="3">
    <location>
        <begin position="1138"/>
        <end position="1163"/>
    </location>
</feature>
<feature type="binding site" evidence="13">
    <location>
        <position position="600"/>
    </location>
    <ligand>
        <name>Ca(2+)</name>
        <dbReference type="ChEBI" id="CHEBI:29108"/>
        <label>1</label>
    </ligand>
</feature>
<feature type="binding site" evidence="13">
    <location>
        <position position="602"/>
    </location>
    <ligand>
        <name>Ca(2+)</name>
        <dbReference type="ChEBI" id="CHEBI:29108"/>
        <label>1</label>
    </ligand>
</feature>
<feature type="binding site" evidence="13">
    <location>
        <position position="604"/>
    </location>
    <ligand>
        <name>Ca(2+)</name>
        <dbReference type="ChEBI" id="CHEBI:29108"/>
        <label>1</label>
    </ligand>
</feature>
<feature type="binding site" evidence="13">
    <location>
        <position position="608"/>
    </location>
    <ligand>
        <name>Ca(2+)</name>
        <dbReference type="ChEBI" id="CHEBI:29108"/>
        <label>1</label>
    </ligand>
</feature>
<feature type="binding site" evidence="4">
    <location>
        <position position="851"/>
    </location>
    <ligand>
        <name>Ca(2+)</name>
        <dbReference type="ChEBI" id="CHEBI:29108"/>
        <label>2</label>
    </ligand>
</feature>
<feature type="binding site" evidence="4">
    <location>
        <position position="853"/>
    </location>
    <ligand>
        <name>Ca(2+)</name>
        <dbReference type="ChEBI" id="CHEBI:29108"/>
        <label>2</label>
    </ligand>
</feature>
<feature type="binding site" evidence="4">
    <location>
        <position position="855"/>
    </location>
    <ligand>
        <name>Ca(2+)</name>
        <dbReference type="ChEBI" id="CHEBI:29108"/>
        <label>2</label>
    </ligand>
</feature>
<feature type="binding site" evidence="4">
    <location>
        <position position="857"/>
    </location>
    <ligand>
        <name>Ca(2+)</name>
        <dbReference type="ChEBI" id="CHEBI:29108"/>
        <label>2</label>
    </ligand>
</feature>
<feature type="binding site" evidence="4">
    <location>
        <position position="859"/>
    </location>
    <ligand>
        <name>Ca(2+)</name>
        <dbReference type="ChEBI" id="CHEBI:29108"/>
        <label>2</label>
    </ligand>
</feature>
<feature type="mutagenesis site" description="Abolishes integrin binding and calcium binding in the first site." evidence="6">
    <original>D</original>
    <variation>A</variation>
    <location>
        <position position="600"/>
    </location>
</feature>
<feature type="mutagenesis site" description="Preserves integrin binding." evidence="6">
    <original>D</original>
    <variation>K</variation>
    <location>
        <position position="600"/>
    </location>
</feature>
<feature type="mutagenesis site" description="Loss of calcium-binding. Significantly reduced twitching motility. Dramatically reduced level of surface T4P. Regains ability to produce normal levels of T4P and is capable of trafficking to the T4P fraction; when associated with pilT deletion mutant." evidence="4">
    <original>D</original>
    <variation>A</variation>
    <location>
        <position position="859"/>
    </location>
</feature>
<feature type="mutagenesis site" description="Loss of calcium-binding. Significantly reduced twitching motility. Insensitive to the effects of calcium chelator EGTA and produces an abundance of non-functional surface T4P. Capable of trafficking to the T4P fraction." evidence="4">
    <original>D</original>
    <variation>K</variation>
    <location>
        <position position="859"/>
    </location>
</feature>
<accession>S0HPF7</accession>
<accession>A8WE64</accession>
<name>PILY1_PSEAW</name>
<organism>
    <name type="scientific">Pseudomonas aeruginosa (strain PAK)</name>
    <dbReference type="NCBI Taxonomy" id="1009714"/>
    <lineage>
        <taxon>Bacteria</taxon>
        <taxon>Pseudomonadati</taxon>
        <taxon>Pseudomonadota</taxon>
        <taxon>Gammaproteobacteria</taxon>
        <taxon>Pseudomonadales</taxon>
        <taxon>Pseudomonadaceae</taxon>
        <taxon>Pseudomonas</taxon>
    </lineage>
</organism>
<comment type="function">
    <text evidence="2 4 5 6">Involved in pilus assembly, twitching motility and adhesion to host cells. Primes type IV pili (T4P) assembly and is required for inclusion of minor pilins PilV, PilW and PilX to the surface pili (By similarity). Stabilizes assembled pilus fibers likely by antagonizing retraction mediated by PilT. Calcium-binding and calcium release by PilY1 seem to be essential for twitching motility and for regulation of pilus retraction dynamics of PilT. Adhesin for human tissue specifically recognizing a host receptor localized or enriched on basolateral epithelial cell surfaces. Binds host integrins in an calcium-dependent manner in vitro and this interaction may be employed by the bacterium to mediate host epithelial cell binding in vivo.</text>
</comment>
<comment type="subunit">
    <text evidence="6">Interacts (via C-terminal 532-1163) with host integrins alpha-V/beta-3 (ITGAV/ITGB3) and alpha-V/beta-5 (ITGAV/ITGB5).</text>
</comment>
<comment type="subcellular location">
    <subcellularLocation>
        <location evidence="4">Fimbrium</location>
    </subcellularLocation>
    <subcellularLocation>
        <location evidence="7">Membrane</location>
    </subcellularLocation>
    <subcellularLocation>
        <location evidence="1">Cytoplasm</location>
        <location evidence="1">Cytosol</location>
    </subcellularLocation>
    <text evidence="2 5 7">Colocalizes with the T4P fraction when surface pili are present (PubMed:20331639, PubMed:8899718). Sheared surface fraction when PilV, PilW and PilX are also present (By similarity).</text>
</comment>
<comment type="disruption phenotype">
    <text evidence="4 5 7">Loss of surface T4P which is not due to the lack of major pilus structural subunit PilA (PubMed:20080557, PubMed:20331639, PubMed:8899718). Lacks measurable twitching motility (PubMed:20080557, PubMed:8899718). T4P fibers are restored when pilus retraction ATPase pilT is deleted at the same time. Does not bind to the injured regions of human ciliated airway epithelium (HAE) during bacterial infection on the contrary to the wild-type which preferentially binds to the injured regions of the HAE (PubMed:20331639).</text>
</comment>
<comment type="miscellaneous">
    <text evidence="6">Residues 600-608 comprise a calcium-binding site which together with the other one (residues 851-859) seems important for interaction with integrins of the host.</text>
</comment>
<comment type="similarity">
    <text evidence="12">Belongs to the PilY1 family.</text>
</comment>
<dbReference type="EMBL" id="EU234515">
    <property type="protein sequence ID" value="ABW89597.1"/>
    <property type="molecule type" value="Genomic_DNA"/>
</dbReference>
<dbReference type="EMBL" id="ASWU01000022">
    <property type="protein sequence ID" value="EOT10199.1"/>
    <property type="molecule type" value="Genomic_DNA"/>
</dbReference>
<dbReference type="EMBL" id="AZUG01000415">
    <property type="protein sequence ID" value="KAJ87266.1"/>
    <property type="molecule type" value="Genomic_DNA"/>
</dbReference>
<dbReference type="RefSeq" id="WP_010793785.1">
    <property type="nucleotide sequence ID" value="NZ_LR657304.1"/>
</dbReference>
<dbReference type="PDB" id="3HX6">
    <property type="method" value="X-ray"/>
    <property type="resolution" value="2.10 A"/>
    <property type="chains" value="A/B=615-1163"/>
</dbReference>
<dbReference type="PDBsum" id="3HX6"/>
<dbReference type="SMR" id="S0HPF7"/>
<dbReference type="PATRIC" id="fig|1009714.6.peg.5062"/>
<dbReference type="GO" id="GO:0005829">
    <property type="term" value="C:cytosol"/>
    <property type="evidence" value="ECO:0007669"/>
    <property type="project" value="UniProtKB-SubCell"/>
</dbReference>
<dbReference type="GO" id="GO:0016020">
    <property type="term" value="C:membrane"/>
    <property type="evidence" value="ECO:0000314"/>
    <property type="project" value="UniProtKB"/>
</dbReference>
<dbReference type="GO" id="GO:0044096">
    <property type="term" value="C:type IV pilus"/>
    <property type="evidence" value="ECO:0000314"/>
    <property type="project" value="UniProtKB"/>
</dbReference>
<dbReference type="GO" id="GO:0005509">
    <property type="term" value="F:calcium ion binding"/>
    <property type="evidence" value="ECO:0000314"/>
    <property type="project" value="UniProtKB"/>
</dbReference>
<dbReference type="GO" id="GO:0043683">
    <property type="term" value="P:type IV pilus assembly"/>
    <property type="evidence" value="ECO:0000315"/>
    <property type="project" value="UniProtKB"/>
</dbReference>
<dbReference type="GO" id="GO:0043107">
    <property type="term" value="P:type IV pilus-dependent motility"/>
    <property type="evidence" value="ECO:0000315"/>
    <property type="project" value="UniProtKB"/>
</dbReference>
<dbReference type="InterPro" id="IPR008707">
    <property type="entry name" value="PilY1_beta_prop_dom"/>
</dbReference>
<dbReference type="InterPro" id="IPR011047">
    <property type="entry name" value="Quinoprotein_ADH-like_sf"/>
</dbReference>
<dbReference type="Pfam" id="PF05567">
    <property type="entry name" value="T4P_PilY1"/>
    <property type="match status" value="1"/>
</dbReference>
<dbReference type="SUPFAM" id="SSF50998">
    <property type="entry name" value="Quinoprotein alcohol dehydrogenase-like"/>
    <property type="match status" value="1"/>
</dbReference>
<evidence type="ECO:0000250" key="1">
    <source>
        <dbReference type="UniProtKB" id="Q02GC2"/>
    </source>
</evidence>
<evidence type="ECO:0000250" key="2">
    <source>
        <dbReference type="UniProtKB" id="Q9HVM8"/>
    </source>
</evidence>
<evidence type="ECO:0000256" key="3">
    <source>
        <dbReference type="SAM" id="MobiDB-lite"/>
    </source>
</evidence>
<evidence type="ECO:0000269" key="4">
    <source>
    </source>
</evidence>
<evidence type="ECO:0000269" key="5">
    <source>
    </source>
</evidence>
<evidence type="ECO:0000269" key="6">
    <source>
    </source>
</evidence>
<evidence type="ECO:0000269" key="7">
    <source>
    </source>
</evidence>
<evidence type="ECO:0000303" key="8">
    <source>
    </source>
</evidence>
<evidence type="ECO:0000303" key="9">
    <source>
    </source>
</evidence>
<evidence type="ECO:0000303" key="10">
    <source>
    </source>
</evidence>
<evidence type="ECO:0000303" key="11">
    <source>
    </source>
</evidence>
<evidence type="ECO:0000305" key="12"/>
<evidence type="ECO:0000305" key="13">
    <source>
    </source>
</evidence>
<evidence type="ECO:0000312" key="14">
    <source>
        <dbReference type="EMBL" id="ABW89597.1"/>
    </source>
</evidence>
<evidence type="ECO:0000312" key="15">
    <source>
        <dbReference type="EMBL" id="EOT10199.1"/>
    </source>
</evidence>
<evidence type="ECO:0000312" key="16">
    <source>
        <dbReference type="EMBL" id="KAJ87266.1"/>
    </source>
</evidence>
<reference evidence="14" key="1">
    <citation type="journal article" date="2010" name="Proc. Natl. Acad. Sci. U.S.A.">
        <title>Crystal structure analysis reveals Pseudomonas PilY1 as an essential calcium-dependent regulator of bacterial surface motility.</title>
        <authorList>
            <person name="Orans J."/>
            <person name="Johnson M.D."/>
            <person name="Coggan K.A."/>
            <person name="Sperlazza J.R."/>
            <person name="Heiniger R.W."/>
            <person name="Wolfgang M.C."/>
            <person name="Redinbo M.R."/>
        </authorList>
    </citation>
    <scope>NUCLEOTIDE SEQUENCE [GENOMIC DNA]</scope>
    <scope>X-RAY CRYSTALLOGRAPHY (2.10 ANGSTROMS) OF 615-1163 OF LEU-712/812/823-MET MUTANT IN COMPLEX WITH CALCIUM</scope>
    <scope>FUNCTION</scope>
    <scope>SUBCELLULAR LOCATION</scope>
    <scope>DISRUPTION PHENOTYPE</scope>
    <scope>MUTAGENESIS OF ASP-859</scope>
    <scope>CIRCULAR DICHROISM</scope>
    <source>
        <strain evidence="14">PAK</strain>
    </source>
</reference>
<reference evidence="15" key="2">
    <citation type="submission" date="2013-05" db="EMBL/GenBank/DDBJ databases">
        <title>The genome sequence of Pseudomonas aeruginosa PAK.</title>
        <authorList>
            <consortium name="The Broad Institute Genomics Platform"/>
            <consortium name="The Broad Institute Genome Sequencing Center for Infectious Disease"/>
            <person name="Hung D."/>
            <person name="Lory S."/>
            <person name="Poulsen B."/>
            <person name="Penaranda C."/>
            <person name="Ausubel F."/>
            <person name="Walker B."/>
            <person name="Young S."/>
            <person name="Zeng Q."/>
            <person name="Gargeya S."/>
            <person name="Fitzgerald M."/>
            <person name="Haas B."/>
            <person name="Abouelleil A."/>
            <person name="Allen A.W."/>
            <person name="Alvarado L."/>
            <person name="Arachchi H.M."/>
            <person name="Berlin A.M."/>
            <person name="Chapman S.B."/>
            <person name="Gainer-Dewar J."/>
            <person name="Goldberg J."/>
            <person name="Griggs A."/>
            <person name="Gujja S."/>
            <person name="Hansen M."/>
            <person name="Howarth C."/>
            <person name="Imamovic A."/>
            <person name="Ireland A."/>
            <person name="Larimer J."/>
            <person name="McCowan C."/>
            <person name="Murphy C."/>
            <person name="Pearson M."/>
            <person name="Poon T.W."/>
            <person name="Priest M."/>
            <person name="Roberts A."/>
            <person name="Saif S."/>
            <person name="Shea T."/>
            <person name="Sisk P."/>
            <person name="Sykes S."/>
            <person name="Wortman J."/>
            <person name="Nusbaum C."/>
            <person name="Birren B."/>
        </authorList>
    </citation>
    <scope>NUCLEOTIDE SEQUENCE [LARGE SCALE GENOMIC DNA]</scope>
    <source>
        <strain evidence="15">PAK</strain>
    </source>
</reference>
<reference evidence="16" key="3">
    <citation type="submission" date="2013-12" db="EMBL/GenBank/DDBJ databases">
        <title>Draft genome sequence of Pseudomonas aeruginosa PAK.</title>
        <authorList>
            <person name="Jorth P."/>
            <person name="Whiteley M."/>
        </authorList>
    </citation>
    <scope>NUCLEOTIDE SEQUENCE [LARGE SCALE GENOMIC DNA]</scope>
    <source>
        <strain evidence="16">PAK</strain>
    </source>
</reference>
<reference key="4">
    <citation type="journal article" date="1996" name="Mol. Microbiol.">
        <title>Fimbrial biogenesis genes of Pseudomonas aeruginosa: pilW and pilX increase the similarity of type 4 fimbriae to the GSP protein-secretion systems and pilY1 encodes a gonococcal PilC homologue.</title>
        <authorList>
            <person name="Alm R.A."/>
            <person name="Hallinan J.P."/>
            <person name="Watson A.A."/>
            <person name="Mattick J.S."/>
        </authorList>
    </citation>
    <scope>SUBCELLULAR LOCATION</scope>
    <scope>DISRUPTION PHENOTYPE</scope>
    <source>
        <strain evidence="11">PAK</strain>
    </source>
</reference>
<reference key="5">
    <citation type="journal article" date="2010" name="Cell. Microbiol.">
        <title>Infection of human mucosal tissue by Pseudomonas aeruginosa requires sequential and mutually dependent virulence factors and a novel pilus-associated adhesin.</title>
        <authorList>
            <person name="Heiniger R.W."/>
            <person name="Winther-Larsen H.C."/>
            <person name="Pickles R.J."/>
            <person name="Koomey M."/>
            <person name="Wolfgang M.C."/>
        </authorList>
    </citation>
    <scope>FUNCTION</scope>
    <scope>SUBCELLULAR LOCATION</scope>
    <scope>DISRUPTION PHENOTYPE</scope>
    <source>
        <strain evidence="9">PAK</strain>
    </source>
</reference>
<reference key="6">
    <citation type="journal article" date="2011" name="PLoS ONE">
        <title>Pseudomonas aeruginosa PilY1 binds integrin in an RGD- and calcium-dependent manner.</title>
        <authorList>
            <person name="Johnson M.D."/>
            <person name="Garrett C.K."/>
            <person name="Bond J.E."/>
            <person name="Coggan K.A."/>
            <person name="Wolfgang M.C."/>
            <person name="Redinbo M.R."/>
        </authorList>
    </citation>
    <scope>FUNCTION</scope>
    <scope>INTERACTION WITH HOST INTEGRINS</scope>
    <scope>CALCIUM-BINDING</scope>
    <scope>CIRCULAR DICHROISM</scope>
    <scope>MUTAGENESIS OF ASP-600</scope>
</reference>
<protein>
    <recommendedName>
        <fullName evidence="8">Type IV pilus biogenesis factor PilY1</fullName>
    </recommendedName>
    <alternativeName>
        <fullName evidence="9">Pilus-associated adhesin PilY</fullName>
    </alternativeName>
</protein>
<sequence length="1163" mass="126248">MKSALHQIGKTSLAAALSGAVLLSAQTTHAAALSVSQQPLMLIQGVAPNMLVTLDDSGSMAYAYAPDSLVNSRNNVYFASNSYNPMYFDPNTQYKLPKKVTLSNGQIQVQDYSKPSFTAAWRNGFTQEGRVNLSRDYRPTVQYQGGSGAGTESSIDWYGAPAFYYQYSGGRGCSLTTSSCYTRVEISGAAQQQNFANWYSFYRTRALATQTAANLAFYSLPENARISWQLLNSSSCLIGSGSSNCYNNYLRDFTGQHRVNFFNWLENLSVGGGTPLRQAMTRAGEFLKKTGVNGPYAYRPGTQTSPEYSCRGSYHILMTDGLWNNDSASVGNADSTSRSLPDGKSYSSQTPYRDAASNTLADQAFHYWATDARPDIDDNIKPYIPYPDQANPSAEYWNPRNDPATWQHMVTYTLGLGLTTSLTSPKWEGSTYSGGYDEIAAGRLSWPNASNNHSNNVYDLWHAAVNSRGEFFSADSPDQLVAAFQDILNRISGKDLPASRPAISSSLQEDDTGDKLTRFAYQTSFASDKNWAGDLTRYSLTTQDKATVQTKLWSAQSILDAMPNGGAGRKIMMAGSGTSGLKEFTWGSLSADQQRQLNRDPDRNDVADTKGQDRVAFLRGDRSKENSDNFRTRNSILGDIINSSPATVGKAQYLTYLAQPIEPSGNYSTFAEAQKTRAPRVYVGANDGMLHGFDTDGNETFAFIPSAVFEKLHKLTARGYQGGAHQFYVDGSPVVADAFFGGAWHTVLIGSLRAGGKGLFALDVTDPANIKLLWEIGVDQEPDLGYSFPKPTVARLHNGKWAVVTGNGYSSLNDKAALLIIDLETGAITRKLEVTGRTGVPNGLSSPRLADNNSDGVADYAYAGDLQGNLWRFDLIAGKVNQDDPFSRANDGPAVASSFRVSFGGQPLYSAVDSAGAAQAITAAPSLVRHPTRKGYIVIFGTGKYFENADARADTSRAQTLYGIWDQQTKGEAAGSTPRLTRGNLQQQTLDLQADSTFASTARTIRIASQNPVNWLNNDGSTKQSGWYLDFMVNGTLKGEMLIEDMIAIGQVVLLQTITPNDDPCADGASNWTYGLDPYTGGRTSFTVFDLARQGVVDSKSDYSYNKQNVAVSGTEQKGLGGLTLSTNEQGNPEVCSSGECLTVNPGPNTRGRQNWRPIEGKN</sequence>
<proteinExistence type="evidence at protein level"/>
<keyword id="KW-0002">3D-structure</keyword>
<keyword id="KW-0106">Calcium</keyword>
<keyword id="KW-0963">Cytoplasm</keyword>
<keyword id="KW-0281">Fimbrium</keyword>
<keyword id="KW-1029">Fimbrium biogenesis</keyword>
<keyword id="KW-0472">Membrane</keyword>
<keyword id="KW-0479">Metal-binding</keyword>
<keyword id="KW-0732">Signal</keyword>